<sequence length="108" mass="12427">MPKPGILKSKSMFCVIYRSSKRDQTYLYVEKKDDFSRVPEELMKGFGQPQLAMILPLDGRKKLVNADIEKVKQALTEQGYYLQLPPPPEDLLKQHLSVMGQKTDDINK</sequence>
<accession>B7UQ64</accession>
<organism>
    <name type="scientific">Escherichia coli O127:H6 (strain E2348/69 / EPEC)</name>
    <dbReference type="NCBI Taxonomy" id="574521"/>
    <lineage>
        <taxon>Bacteria</taxon>
        <taxon>Pseudomonadati</taxon>
        <taxon>Pseudomonadota</taxon>
        <taxon>Gammaproteobacteria</taxon>
        <taxon>Enterobacterales</taxon>
        <taxon>Enterobacteriaceae</taxon>
        <taxon>Escherichia</taxon>
    </lineage>
</organism>
<feature type="chain" id="PRO_0000375295" description="Protein YcgL">
    <location>
        <begin position="1"/>
        <end position="108"/>
    </location>
</feature>
<feature type="domain" description="YcgL" evidence="1">
    <location>
        <begin position="12"/>
        <end position="96"/>
    </location>
</feature>
<proteinExistence type="inferred from homology"/>
<evidence type="ECO:0000255" key="1">
    <source>
        <dbReference type="HAMAP-Rule" id="MF_01866"/>
    </source>
</evidence>
<evidence type="ECO:0000305" key="2"/>
<keyword id="KW-1185">Reference proteome</keyword>
<reference key="1">
    <citation type="journal article" date="2009" name="J. Bacteriol.">
        <title>Complete genome sequence and comparative genome analysis of enteropathogenic Escherichia coli O127:H6 strain E2348/69.</title>
        <authorList>
            <person name="Iguchi A."/>
            <person name="Thomson N.R."/>
            <person name="Ogura Y."/>
            <person name="Saunders D."/>
            <person name="Ooka T."/>
            <person name="Henderson I.R."/>
            <person name="Harris D."/>
            <person name="Asadulghani M."/>
            <person name="Kurokawa K."/>
            <person name="Dean P."/>
            <person name="Kenny B."/>
            <person name="Quail M.A."/>
            <person name="Thurston S."/>
            <person name="Dougan G."/>
            <person name="Hayashi T."/>
            <person name="Parkhill J."/>
            <person name="Frankel G."/>
        </authorList>
    </citation>
    <scope>NUCLEOTIDE SEQUENCE [LARGE SCALE GENOMIC DNA]</scope>
    <source>
        <strain>E2348/69 / EPEC</strain>
    </source>
</reference>
<name>YCGL_ECO27</name>
<comment type="sequence caution" evidence="2">
    <conflict type="erroneous initiation">
        <sequence resource="EMBL-CDS" id="CAS08846"/>
    </conflict>
</comment>
<protein>
    <recommendedName>
        <fullName evidence="1">Protein YcgL</fullName>
    </recommendedName>
</protein>
<dbReference type="EMBL" id="FM180568">
    <property type="protein sequence ID" value="CAS08846.1"/>
    <property type="status" value="ALT_INIT"/>
    <property type="molecule type" value="Genomic_DNA"/>
</dbReference>
<dbReference type="SMR" id="B7UQ64"/>
<dbReference type="KEGG" id="ecg:E2348C_1298"/>
<dbReference type="HOGENOM" id="CLU_155118_1_0_6"/>
<dbReference type="Proteomes" id="UP000008205">
    <property type="component" value="Chromosome"/>
</dbReference>
<dbReference type="Gene3D" id="3.10.510.20">
    <property type="entry name" value="YcgL domain"/>
    <property type="match status" value="1"/>
</dbReference>
<dbReference type="HAMAP" id="MF_01866">
    <property type="entry name" value="UPF0745"/>
    <property type="match status" value="1"/>
</dbReference>
<dbReference type="InterPro" id="IPR038068">
    <property type="entry name" value="YcgL-like_sf"/>
</dbReference>
<dbReference type="InterPro" id="IPR027354">
    <property type="entry name" value="YcgL_dom"/>
</dbReference>
<dbReference type="PANTHER" id="PTHR38109">
    <property type="entry name" value="PROTEIN YCGL"/>
    <property type="match status" value="1"/>
</dbReference>
<dbReference type="PANTHER" id="PTHR38109:SF1">
    <property type="entry name" value="PROTEIN YCGL"/>
    <property type="match status" value="1"/>
</dbReference>
<dbReference type="Pfam" id="PF05166">
    <property type="entry name" value="YcgL"/>
    <property type="match status" value="1"/>
</dbReference>
<dbReference type="SUPFAM" id="SSF160191">
    <property type="entry name" value="YcgL-like"/>
    <property type="match status" value="1"/>
</dbReference>
<dbReference type="PROSITE" id="PS51648">
    <property type="entry name" value="YCGL"/>
    <property type="match status" value="1"/>
</dbReference>
<gene>
    <name evidence="1" type="primary">ycgL</name>
    <name type="ordered locus">E2348C_1298</name>
</gene>